<name>TI214_LEPVR</name>
<protein>
    <recommendedName>
        <fullName evidence="1">Protein TIC 214</fullName>
    </recommendedName>
    <alternativeName>
        <fullName evidence="1">Translocon at the inner envelope membrane of chloroplasts 214</fullName>
        <shortName evidence="1">AtTIC214</shortName>
    </alternativeName>
</protein>
<feature type="chain" id="PRO_0000326579" description="Protein TIC 214">
    <location>
        <begin position="1"/>
        <end position="1734"/>
    </location>
</feature>
<feature type="transmembrane region" description="Helical" evidence="2">
    <location>
        <begin position="19"/>
        <end position="39"/>
    </location>
</feature>
<feature type="transmembrane region" description="Helical" evidence="2">
    <location>
        <begin position="68"/>
        <end position="88"/>
    </location>
</feature>
<feature type="transmembrane region" description="Helical" evidence="2">
    <location>
        <begin position="91"/>
        <end position="111"/>
    </location>
</feature>
<feature type="transmembrane region" description="Helical" evidence="2">
    <location>
        <begin position="133"/>
        <end position="153"/>
    </location>
</feature>
<feature type="transmembrane region" description="Helical" evidence="2">
    <location>
        <begin position="176"/>
        <end position="196"/>
    </location>
</feature>
<feature type="transmembrane region" description="Helical" evidence="2">
    <location>
        <begin position="227"/>
        <end position="247"/>
    </location>
</feature>
<feature type="coiled-coil region" evidence="2">
    <location>
        <begin position="1433"/>
        <end position="1485"/>
    </location>
</feature>
<keyword id="KW-0150">Chloroplast</keyword>
<keyword id="KW-0175">Coiled coil</keyword>
<keyword id="KW-0472">Membrane</keyword>
<keyword id="KW-0934">Plastid</keyword>
<keyword id="KW-1001">Plastid inner membrane</keyword>
<keyword id="KW-0653">Protein transport</keyword>
<keyword id="KW-0812">Transmembrane</keyword>
<keyword id="KW-1133">Transmembrane helix</keyword>
<keyword id="KW-0813">Transport</keyword>
<geneLocation type="chloroplast"/>
<gene>
    <name evidence="1" type="primary">TIC214</name>
    <name type="synonym">ycf1-A</name>
</gene>
<gene>
    <name evidence="1" type="primary">TIC214</name>
    <name type="synonym">ycf1-B</name>
</gene>
<accession>A4QLG7</accession>
<accession>A4QLF5</accession>
<sequence>MMVFQSFILGNLVSLCMKIINSVVVVGLYYGFLTTFSIGPSYLFLLRARVMDEGEEGTEKKVSATTGFIAGQLMMFISIYYAPLHLALGRPHTITVLALPYLLFHFFWNNHKHFLDYGSTTRNEMRNLRIQCVFLNNLIFQLFNHFILPSSMLARLVNIYMFRCNNKMLFVTSSFVGWLIGHILFMKWVGLVLVWIQQNNSIRSNVLIRSNKYKFLVSELRNSMARIFSILLFITCVYYLGRMPSPIFTKKLKGTSETEERGGTKQDQEVSIEEAPFPSLFLDGNKENSNLEFFKIKKKEDYCLWFEKPFVTLVFDYKRWNRPNRYIKNDKIENTVRNEMSQYFFYTCQSDGKERISFTYPPSLSTFFEMIQKKIPSFTREKTASTQVSTYWSLINEEKKENLKKELLNRIEALDKGWSVENILEKTTRFCHNETKKEYLPKIYDPSLHGISRGRIKKLPPFKIITETYITNNIGGSWINKIHGILLKINYQKFEQTLEKFNRKSLSIEKKLYFFSEPQEEKIHSEEELKIFKFLFNVVRTDSNDQTLNRTNFIDFHEITKKVPRWSYKLIGELEELEGENEDNVPMEPGIRSRKGKRVVIFTDNQNSDQNDEMALIRYSQQSDFRREIIKGSMRSQRRKTVIWEFFQAKVHSPLFFDRIDKLFLFSFDIRGLKKKILRNFMWKNKKKKKIDKKEEEQSKIEEKRRIEIAETWDSFLFAQIIRGFLLITQSILRKYIILPLLIIMKNSVRMLLFQIPEWSEDLKDWKREMHVKCTYNGVQLSETEFPRNWLTDGIQIKILFPFYLKPWHKSKFQSSQKARLKKTKAKGEKNAFCFLTVWGMETELPFGSAQRKPSFFQPISKELKKRIKKLKTKPFLVLGIFKERATICLKVAKEIKNWILKNSLFIKVKRKNLSKPNKIPVFGPREIFELNETKKDSIMSNQMIYELSVQNKSMEWRNSSLSENKIKNLIDRIKTIRNQIEEISKEKENLTNSCNKLRYDSKIIESAKRIWQIFKRKNTRFIRKSIFFIKFCIEQLSIAIFLGISNIPRITTQLFFESTKTILNKYIYKNEEKVEKINKKKNTIYFISTIKNLISNKKKISYDLCSLSQAYVFYKLSQIQVSNFSKLKAVLEYNICITSFFVKNQIKDFFQEQGIFHYELKDKTFFNSEVNQWKNWLRSHYQYNLPQVAWARLVTQKWKTKITQDSLVLNPSLTKEDSYEKKKFDNSKKDNFFEANLLLNPKHNLKKDSIYNLFCYKSINSTEKKFDMSIGIALDNCLVSCFLEKYNIRGTGEIRHRKYLDWRILNFWFTKKVNIEPWVDTKSKKKYINTKVQNYQRIDKITKTSLANQKRNFFDWMGMNEEILNPCITNFEFFFFPEFLLFSSTYKTKPWVIPIKLLLFNFNENINVNKKITRKKTSFIPSNENKSLLFYNLNNEEKELADEVELESDNEKQINPESALSNQEKTIQEIYAESKKKKRQNKKQSKSNTEVELDLFLTRHSRFQLRWNCFFNQKILNNVKVYCLLIRLKNPNEIAISSIERGEMSLDILMIEKNFTLAKLMKKGILIIEPVRLSVQNNGQLIIYRTIGISLVQKNKHKISKRYKKKIEKSITKYQKKTVNRKKNHYDFFVPENILSPKRRREFRILICFNLKKKNASDRNSRFDKNIQNLTTVLHKKKDLDKDQNNLIKFKSFLWPNFRLEDLACMNRYWFNTTNGNHFSMIRIHMYTRFPIH</sequence>
<organism>
    <name type="scientific">Lepidium virginicum</name>
    <name type="common">Virginia pepperweed</name>
    <dbReference type="NCBI Taxonomy" id="59292"/>
    <lineage>
        <taxon>Eukaryota</taxon>
        <taxon>Viridiplantae</taxon>
        <taxon>Streptophyta</taxon>
        <taxon>Embryophyta</taxon>
        <taxon>Tracheophyta</taxon>
        <taxon>Spermatophyta</taxon>
        <taxon>Magnoliopsida</taxon>
        <taxon>eudicotyledons</taxon>
        <taxon>Gunneridae</taxon>
        <taxon>Pentapetalae</taxon>
        <taxon>rosids</taxon>
        <taxon>malvids</taxon>
        <taxon>Brassicales</taxon>
        <taxon>Brassicaceae</taxon>
        <taxon>Lepidieae</taxon>
        <taxon>Lepidium</taxon>
    </lineage>
</organism>
<evidence type="ECO:0000250" key="1">
    <source>
        <dbReference type="UniProtKB" id="P56785"/>
    </source>
</evidence>
<evidence type="ECO:0000255" key="2"/>
<evidence type="ECO:0000305" key="3"/>
<dbReference type="EMBL" id="AP009374">
    <property type="protein sequence ID" value="BAF50522.1"/>
    <property type="molecule type" value="Genomic_DNA"/>
</dbReference>
<dbReference type="EMBL" id="AP009374">
    <property type="protein sequence ID" value="BAF50510.1"/>
    <property type="molecule type" value="Genomic_DNA"/>
</dbReference>
<dbReference type="GO" id="GO:0009706">
    <property type="term" value="C:chloroplast inner membrane"/>
    <property type="evidence" value="ECO:0007669"/>
    <property type="project" value="UniProtKB-SubCell"/>
</dbReference>
<dbReference type="GO" id="GO:0015031">
    <property type="term" value="P:protein transport"/>
    <property type="evidence" value="ECO:0007669"/>
    <property type="project" value="UniProtKB-KW"/>
</dbReference>
<dbReference type="InterPro" id="IPR008896">
    <property type="entry name" value="TIC214"/>
</dbReference>
<dbReference type="PANTHER" id="PTHR33163:SF40">
    <property type="entry name" value="PROTEIN TIC 214"/>
    <property type="match status" value="1"/>
</dbReference>
<dbReference type="PANTHER" id="PTHR33163">
    <property type="entry name" value="PROTEIN TIC 214-RELATED"/>
    <property type="match status" value="1"/>
</dbReference>
<dbReference type="Pfam" id="PF05758">
    <property type="entry name" value="Ycf1"/>
    <property type="match status" value="2"/>
</dbReference>
<proteinExistence type="inferred from homology"/>
<comment type="function">
    <text evidence="1">Involved in protein precursor import into chloroplasts. May be part of an intermediate translocation complex acting as a protein-conducting channel at the inner envelope.</text>
</comment>
<comment type="subunit">
    <text evidence="1">Part of the Tic complex.</text>
</comment>
<comment type="subcellular location">
    <subcellularLocation>
        <location evidence="1">Plastid</location>
        <location evidence="1">Chloroplast inner membrane</location>
        <topology evidence="2">Multi-pass membrane protein</topology>
    </subcellularLocation>
</comment>
<comment type="miscellaneous">
    <text>There is a partial copy of the N-terminus (positions 1-302) of ycf1 in the inverted repeat (BAF50510).</text>
</comment>
<comment type="similarity">
    <text evidence="3">Belongs to the TIC214 family.</text>
</comment>
<reference key="1">
    <citation type="submission" date="2007-03" db="EMBL/GenBank/DDBJ databases">
        <title>Sequencing analysis of Lepidium virginicum JO26 chloroplast DNA.</title>
        <authorList>
            <person name="Hosouchi T."/>
            <person name="Tsuruoka H."/>
            <person name="Kotani H."/>
        </authorList>
    </citation>
    <scope>NUCLEOTIDE SEQUENCE [LARGE SCALE GENOMIC DNA]</scope>
</reference>